<evidence type="ECO:0000255" key="1">
    <source>
        <dbReference type="HAMAP-Rule" id="MF_01032"/>
    </source>
</evidence>
<proteinExistence type="inferred from homology"/>
<reference key="1">
    <citation type="submission" date="2007-06" db="EMBL/GenBank/DDBJ databases">
        <title>Complete sequence of Clostridium beijerinckii NCIMB 8052.</title>
        <authorList>
            <consortium name="US DOE Joint Genome Institute"/>
            <person name="Copeland A."/>
            <person name="Lucas S."/>
            <person name="Lapidus A."/>
            <person name="Barry K."/>
            <person name="Detter J.C."/>
            <person name="Glavina del Rio T."/>
            <person name="Hammon N."/>
            <person name="Israni S."/>
            <person name="Dalin E."/>
            <person name="Tice H."/>
            <person name="Pitluck S."/>
            <person name="Sims D."/>
            <person name="Brettin T."/>
            <person name="Bruce D."/>
            <person name="Tapia R."/>
            <person name="Brainard J."/>
            <person name="Schmutz J."/>
            <person name="Larimer F."/>
            <person name="Land M."/>
            <person name="Hauser L."/>
            <person name="Kyrpides N."/>
            <person name="Mikhailova N."/>
            <person name="Bennet G."/>
            <person name="Cann I."/>
            <person name="Chen J.-S."/>
            <person name="Contreras A.L."/>
            <person name="Jones D."/>
            <person name="Kashket E."/>
            <person name="Mitchell W."/>
            <person name="Stoddard S."/>
            <person name="Schwarz W."/>
            <person name="Qureshi N."/>
            <person name="Young M."/>
            <person name="Shi Z."/>
            <person name="Ezeji T."/>
            <person name="White B."/>
            <person name="Blaschek H."/>
            <person name="Richardson P."/>
        </authorList>
    </citation>
    <scope>NUCLEOTIDE SEQUENCE [LARGE SCALE GENOMIC DNA]</scope>
    <source>
        <strain>ATCC 51743 / NCIMB 8052</strain>
    </source>
</reference>
<dbReference type="EC" id="4.2.1.33" evidence="1"/>
<dbReference type="EMBL" id="CP000721">
    <property type="protein sequence ID" value="ABR32405.1"/>
    <property type="molecule type" value="Genomic_DNA"/>
</dbReference>
<dbReference type="RefSeq" id="WP_011967567.1">
    <property type="nucleotide sequence ID" value="NC_009617.1"/>
</dbReference>
<dbReference type="SMR" id="A6LPX5"/>
<dbReference type="KEGG" id="cbe:Cbei_0215"/>
<dbReference type="eggNOG" id="COG0066">
    <property type="taxonomic scope" value="Bacteria"/>
</dbReference>
<dbReference type="HOGENOM" id="CLU_081378_1_1_9"/>
<dbReference type="UniPathway" id="UPA00048">
    <property type="reaction ID" value="UER00071"/>
</dbReference>
<dbReference type="Proteomes" id="UP000000565">
    <property type="component" value="Chromosome"/>
</dbReference>
<dbReference type="GO" id="GO:0003861">
    <property type="term" value="F:3-isopropylmalate dehydratase activity"/>
    <property type="evidence" value="ECO:0007669"/>
    <property type="project" value="UniProtKB-UniRule"/>
</dbReference>
<dbReference type="GO" id="GO:0009098">
    <property type="term" value="P:L-leucine biosynthetic process"/>
    <property type="evidence" value="ECO:0007669"/>
    <property type="project" value="UniProtKB-UniRule"/>
</dbReference>
<dbReference type="CDD" id="cd01577">
    <property type="entry name" value="IPMI_Swivel"/>
    <property type="match status" value="1"/>
</dbReference>
<dbReference type="FunFam" id="3.20.19.10:FF:000007">
    <property type="entry name" value="Isopropylmalate/citramalate isomerase small subunit"/>
    <property type="match status" value="1"/>
</dbReference>
<dbReference type="Gene3D" id="3.20.19.10">
    <property type="entry name" value="Aconitase, domain 4"/>
    <property type="match status" value="1"/>
</dbReference>
<dbReference type="HAMAP" id="MF_01032">
    <property type="entry name" value="LeuD_type2"/>
    <property type="match status" value="1"/>
</dbReference>
<dbReference type="InterPro" id="IPR015928">
    <property type="entry name" value="Aconitase/3IPM_dehydase_swvl"/>
</dbReference>
<dbReference type="InterPro" id="IPR000573">
    <property type="entry name" value="AconitaseA/IPMdHydase_ssu_swvl"/>
</dbReference>
<dbReference type="InterPro" id="IPR033940">
    <property type="entry name" value="IPMI_Swivel"/>
</dbReference>
<dbReference type="InterPro" id="IPR050075">
    <property type="entry name" value="LeuD"/>
</dbReference>
<dbReference type="InterPro" id="IPR011824">
    <property type="entry name" value="LeuD/DmdB_bac"/>
</dbReference>
<dbReference type="InterPro" id="IPR011827">
    <property type="entry name" value="LeuD_type2/HacB/DmdB"/>
</dbReference>
<dbReference type="NCBIfam" id="TIGR02084">
    <property type="entry name" value="leud"/>
    <property type="match status" value="1"/>
</dbReference>
<dbReference type="NCBIfam" id="TIGR02087">
    <property type="entry name" value="LEUD_arch"/>
    <property type="match status" value="1"/>
</dbReference>
<dbReference type="PANTHER" id="PTHR43345:SF2">
    <property type="entry name" value="3-ISOPROPYLMALATE DEHYDRATASE SMALL SUBUNIT 1"/>
    <property type="match status" value="1"/>
</dbReference>
<dbReference type="PANTHER" id="PTHR43345">
    <property type="entry name" value="3-ISOPROPYLMALATE DEHYDRATASE SMALL SUBUNIT 2-RELATED-RELATED"/>
    <property type="match status" value="1"/>
</dbReference>
<dbReference type="Pfam" id="PF00694">
    <property type="entry name" value="Aconitase_C"/>
    <property type="match status" value="1"/>
</dbReference>
<dbReference type="SUPFAM" id="SSF52016">
    <property type="entry name" value="LeuD/IlvD-like"/>
    <property type="match status" value="1"/>
</dbReference>
<name>LEUD_CLOB8</name>
<comment type="function">
    <text evidence="1">Catalyzes the isomerization between 2-isopropylmalate and 3-isopropylmalate, via the formation of 2-isopropylmaleate.</text>
</comment>
<comment type="catalytic activity">
    <reaction evidence="1">
        <text>(2R,3S)-3-isopropylmalate = (2S)-2-isopropylmalate</text>
        <dbReference type="Rhea" id="RHEA:32287"/>
        <dbReference type="ChEBI" id="CHEBI:1178"/>
        <dbReference type="ChEBI" id="CHEBI:35121"/>
        <dbReference type="EC" id="4.2.1.33"/>
    </reaction>
</comment>
<comment type="pathway">
    <text evidence="1">Amino-acid biosynthesis; L-leucine biosynthesis; L-leucine from 3-methyl-2-oxobutanoate: step 2/4.</text>
</comment>
<comment type="subunit">
    <text evidence="1">Heterodimer of LeuC and LeuD.</text>
</comment>
<comment type="similarity">
    <text evidence="1">Belongs to the LeuD family. LeuD type 2 subfamily.</text>
</comment>
<protein>
    <recommendedName>
        <fullName evidence="1">3-isopropylmalate dehydratase small subunit</fullName>
        <ecNumber evidence="1">4.2.1.33</ecNumber>
    </recommendedName>
    <alternativeName>
        <fullName evidence="1">Alpha-IPM isomerase</fullName>
        <shortName evidence="1">IPMI</shortName>
    </alternativeName>
    <alternativeName>
        <fullName evidence="1">Isopropylmalate isomerase</fullName>
    </alternativeName>
</protein>
<gene>
    <name evidence="1" type="primary">leuD</name>
    <name type="ordered locus">Cbei_0215</name>
</gene>
<accession>A6LPX5</accession>
<organism>
    <name type="scientific">Clostridium beijerinckii (strain ATCC 51743 / NCIMB 8052)</name>
    <name type="common">Clostridium acetobutylicum</name>
    <dbReference type="NCBI Taxonomy" id="290402"/>
    <lineage>
        <taxon>Bacteria</taxon>
        <taxon>Bacillati</taxon>
        <taxon>Bacillota</taxon>
        <taxon>Clostridia</taxon>
        <taxon>Eubacteriales</taxon>
        <taxon>Clostridiaceae</taxon>
        <taxon>Clostridium</taxon>
    </lineage>
</organism>
<feature type="chain" id="PRO_1000135845" description="3-isopropylmalate dehydratase small subunit">
    <location>
        <begin position="1"/>
        <end position="161"/>
    </location>
</feature>
<keyword id="KW-0028">Amino-acid biosynthesis</keyword>
<keyword id="KW-0100">Branched-chain amino acid biosynthesis</keyword>
<keyword id="KW-0432">Leucine biosynthesis</keyword>
<keyword id="KW-0456">Lyase</keyword>
<sequence>MSVKGKVFKYGDNVDTDVIIPARYLNTSDANELAAHCMEDIDVDFVKNVKSGDIIVANKNFGCGSSREHAPLAIKTAGVSCVIASTFARIFYRNAINIGLPILECDEAVKNIDAGDELEVDFSTGLIKNLTKSQEYQGEAFPEFMQKIIDNDGLIGYIRNR</sequence>